<sequence length="61" mass="7137">MDLQQSETDDKQPEQLVIYVCGDCGQENILKRGDVFQCRDCGFRILYKKRILDKKETRIGV</sequence>
<proteinExistence type="inferred from homology"/>
<organism>
    <name type="scientific">Arabidopsis thaliana</name>
    <name type="common">Mouse-ear cress</name>
    <dbReference type="NCBI Taxonomy" id="3702"/>
    <lineage>
        <taxon>Eukaryota</taxon>
        <taxon>Viridiplantae</taxon>
        <taxon>Streptophyta</taxon>
        <taxon>Embryophyta</taxon>
        <taxon>Tracheophyta</taxon>
        <taxon>Spermatophyta</taxon>
        <taxon>Magnoliopsida</taxon>
        <taxon>eudicotyledons</taxon>
        <taxon>Gunneridae</taxon>
        <taxon>Pentapetalae</taxon>
        <taxon>rosids</taxon>
        <taxon>malvids</taxon>
        <taxon>Brassicales</taxon>
        <taxon>Brassicaceae</taxon>
        <taxon>Camelineae</taxon>
        <taxon>Arabidopsis</taxon>
    </lineage>
</organism>
<gene>
    <name type="primary">NRPB12L</name>
    <name type="ordered locus">At1g53690</name>
    <name type="ORF">F22G10.4</name>
</gene>
<evidence type="ECO:0000250" key="1"/>
<evidence type="ECO:0000305" key="2"/>
<protein>
    <recommendedName>
        <fullName>DNA-directed RNA polymerase subunit 12-like protein</fullName>
    </recommendedName>
</protein>
<keyword id="KW-0479">Metal-binding</keyword>
<keyword id="KW-0539">Nucleus</keyword>
<keyword id="KW-1185">Reference proteome</keyword>
<keyword id="KW-0862">Zinc</keyword>
<reference key="1">
    <citation type="journal article" date="2000" name="Nature">
        <title>Sequence and analysis of chromosome 1 of the plant Arabidopsis thaliana.</title>
        <authorList>
            <person name="Theologis A."/>
            <person name="Ecker J.R."/>
            <person name="Palm C.J."/>
            <person name="Federspiel N.A."/>
            <person name="Kaul S."/>
            <person name="White O."/>
            <person name="Alonso J."/>
            <person name="Altafi H."/>
            <person name="Araujo R."/>
            <person name="Bowman C.L."/>
            <person name="Brooks S.Y."/>
            <person name="Buehler E."/>
            <person name="Chan A."/>
            <person name="Chao Q."/>
            <person name="Chen H."/>
            <person name="Cheuk R.F."/>
            <person name="Chin C.W."/>
            <person name="Chung M.K."/>
            <person name="Conn L."/>
            <person name="Conway A.B."/>
            <person name="Conway A.R."/>
            <person name="Creasy T.H."/>
            <person name="Dewar K."/>
            <person name="Dunn P."/>
            <person name="Etgu P."/>
            <person name="Feldblyum T.V."/>
            <person name="Feng J.-D."/>
            <person name="Fong B."/>
            <person name="Fujii C.Y."/>
            <person name="Gill J.E."/>
            <person name="Goldsmith A.D."/>
            <person name="Haas B."/>
            <person name="Hansen N.F."/>
            <person name="Hughes B."/>
            <person name="Huizar L."/>
            <person name="Hunter J.L."/>
            <person name="Jenkins J."/>
            <person name="Johnson-Hopson C."/>
            <person name="Khan S."/>
            <person name="Khaykin E."/>
            <person name="Kim C.J."/>
            <person name="Koo H.L."/>
            <person name="Kremenetskaia I."/>
            <person name="Kurtz D.B."/>
            <person name="Kwan A."/>
            <person name="Lam B."/>
            <person name="Langin-Hooper S."/>
            <person name="Lee A."/>
            <person name="Lee J.M."/>
            <person name="Lenz C.A."/>
            <person name="Li J.H."/>
            <person name="Li Y.-P."/>
            <person name="Lin X."/>
            <person name="Liu S.X."/>
            <person name="Liu Z.A."/>
            <person name="Luros J.S."/>
            <person name="Maiti R."/>
            <person name="Marziali A."/>
            <person name="Militscher J."/>
            <person name="Miranda M."/>
            <person name="Nguyen M."/>
            <person name="Nierman W.C."/>
            <person name="Osborne B.I."/>
            <person name="Pai G."/>
            <person name="Peterson J."/>
            <person name="Pham P.K."/>
            <person name="Rizzo M."/>
            <person name="Rooney T."/>
            <person name="Rowley D."/>
            <person name="Sakano H."/>
            <person name="Salzberg S.L."/>
            <person name="Schwartz J.R."/>
            <person name="Shinn P."/>
            <person name="Southwick A.M."/>
            <person name="Sun H."/>
            <person name="Tallon L.J."/>
            <person name="Tambunga G."/>
            <person name="Toriumi M.J."/>
            <person name="Town C.D."/>
            <person name="Utterback T."/>
            <person name="Van Aken S."/>
            <person name="Vaysberg M."/>
            <person name="Vysotskaia V.S."/>
            <person name="Walker M."/>
            <person name="Wu D."/>
            <person name="Yu G."/>
            <person name="Fraser C.M."/>
            <person name="Venter J.C."/>
            <person name="Davis R.W."/>
        </authorList>
    </citation>
    <scope>NUCLEOTIDE SEQUENCE [LARGE SCALE GENOMIC DNA]</scope>
    <source>
        <strain>cv. Columbia</strain>
    </source>
</reference>
<reference key="2">
    <citation type="journal article" date="2017" name="Plant J.">
        <title>Araport11: a complete reannotation of the Arabidopsis thaliana reference genome.</title>
        <authorList>
            <person name="Cheng C.Y."/>
            <person name="Krishnakumar V."/>
            <person name="Chan A.P."/>
            <person name="Thibaud-Nissen F."/>
            <person name="Schobel S."/>
            <person name="Town C.D."/>
        </authorList>
    </citation>
    <scope>GENOME REANNOTATION</scope>
    <source>
        <strain>cv. Columbia</strain>
    </source>
</reference>
<reference key="3">
    <citation type="journal article" date="2009" name="Mol. Cell">
        <title>Subunit compositions of the RNA-silencing enzymes Pol IV and Pol V reveal their origins as specialized forms of RNA polymerase II.</title>
        <authorList>
            <person name="Ream T.S."/>
            <person name="Haag J.R."/>
            <person name="Wierzbicki A.T."/>
            <person name="Nicora C.D."/>
            <person name="Norbeck A.D."/>
            <person name="Zhu J.K."/>
            <person name="Hagen G."/>
            <person name="Guilfoyle T.J."/>
            <person name="Pasa-Tolic L."/>
            <person name="Pikaard C.S."/>
        </authorList>
    </citation>
    <scope>NOMENCLATURE</scope>
</reference>
<dbReference type="EMBL" id="AC024260">
    <property type="protein sequence ID" value="AAG51987.1"/>
    <property type="molecule type" value="Genomic_DNA"/>
</dbReference>
<dbReference type="EMBL" id="CP002684">
    <property type="status" value="NOT_ANNOTATED_CDS"/>
    <property type="molecule type" value="Genomic_DNA"/>
</dbReference>
<dbReference type="PIR" id="B96577">
    <property type="entry name" value="B96577"/>
</dbReference>
<dbReference type="SMR" id="Q9C8M4"/>
<dbReference type="FunCoup" id="Q9C8M4">
    <property type="interactions" value="467"/>
</dbReference>
<dbReference type="STRING" id="3702.Q9C8M4"/>
<dbReference type="PaxDb" id="3702-AT1G53690.1"/>
<dbReference type="Araport" id="AT1G53690"/>
<dbReference type="TAIR" id="AT1G53690"/>
<dbReference type="eggNOG" id="KOG3507">
    <property type="taxonomic scope" value="Eukaryota"/>
</dbReference>
<dbReference type="HOGENOM" id="CLU_179456_1_0_1"/>
<dbReference type="InParanoid" id="Q9C8M4"/>
<dbReference type="PhylomeDB" id="Q9C8M4"/>
<dbReference type="PRO" id="PR:Q9C8M4"/>
<dbReference type="Proteomes" id="UP000006548">
    <property type="component" value="Chromosome 1"/>
</dbReference>
<dbReference type="ExpressionAtlas" id="Q9C8M4">
    <property type="expression patterns" value="baseline and differential"/>
</dbReference>
<dbReference type="GO" id="GO:0005736">
    <property type="term" value="C:RNA polymerase I complex"/>
    <property type="evidence" value="ECO:0000318"/>
    <property type="project" value="GO_Central"/>
</dbReference>
<dbReference type="GO" id="GO:0005665">
    <property type="term" value="C:RNA polymerase II, core complex"/>
    <property type="evidence" value="ECO:0000318"/>
    <property type="project" value="GO_Central"/>
</dbReference>
<dbReference type="GO" id="GO:0005666">
    <property type="term" value="C:RNA polymerase III complex"/>
    <property type="evidence" value="ECO:0000318"/>
    <property type="project" value="GO_Central"/>
</dbReference>
<dbReference type="GO" id="GO:0003677">
    <property type="term" value="F:DNA binding"/>
    <property type="evidence" value="ECO:0007669"/>
    <property type="project" value="InterPro"/>
</dbReference>
<dbReference type="GO" id="GO:0003899">
    <property type="term" value="F:DNA-directed RNA polymerase activity"/>
    <property type="evidence" value="ECO:0007669"/>
    <property type="project" value="InterPro"/>
</dbReference>
<dbReference type="GO" id="GO:0008270">
    <property type="term" value="F:zinc ion binding"/>
    <property type="evidence" value="ECO:0007669"/>
    <property type="project" value="InterPro"/>
</dbReference>
<dbReference type="GO" id="GO:0006351">
    <property type="term" value="P:DNA-templated transcription"/>
    <property type="evidence" value="ECO:0007669"/>
    <property type="project" value="InterPro"/>
</dbReference>
<dbReference type="GO" id="GO:0009860">
    <property type="term" value="P:pollen tube growth"/>
    <property type="evidence" value="ECO:0000270"/>
    <property type="project" value="TAIR"/>
</dbReference>
<dbReference type="FunFam" id="2.20.28.30:FF:000002">
    <property type="entry name" value="DNA-directed RNA polymerases II, IV and V subunit 12"/>
    <property type="match status" value="1"/>
</dbReference>
<dbReference type="Gene3D" id="2.20.28.30">
    <property type="entry name" value="RNA polymerase ii, chain L"/>
    <property type="match status" value="1"/>
</dbReference>
<dbReference type="InterPro" id="IPR006591">
    <property type="entry name" value="RNAP_P/RPABC4"/>
</dbReference>
<dbReference type="InterPro" id="IPR039747">
    <property type="entry name" value="RPABC4"/>
</dbReference>
<dbReference type="InterPro" id="IPR029040">
    <property type="entry name" value="RPABC4/Spt4"/>
</dbReference>
<dbReference type="PANTHER" id="PTHR12056">
    <property type="entry name" value="DNA-DIRECTED RNA POLYMERASES I, II, AND III"/>
    <property type="match status" value="1"/>
</dbReference>
<dbReference type="PANTHER" id="PTHR12056:SF2">
    <property type="entry name" value="GEO11084P1"/>
    <property type="match status" value="1"/>
</dbReference>
<dbReference type="Pfam" id="PF03604">
    <property type="entry name" value="Zn_ribbon_RPAB4"/>
    <property type="match status" value="1"/>
</dbReference>
<dbReference type="SMART" id="SM00659">
    <property type="entry name" value="RPOLCX"/>
    <property type="match status" value="1"/>
</dbReference>
<dbReference type="SUPFAM" id="SSF63393">
    <property type="entry name" value="RNA polymerase subunits"/>
    <property type="match status" value="1"/>
</dbReference>
<name>RPBCL_ARATH</name>
<comment type="subcellular location">
    <subcellularLocation>
        <location evidence="1">Nucleus</location>
    </subcellularLocation>
</comment>
<comment type="similarity">
    <text evidence="2">Belongs to the archaeal Rpo12/eukaryotic RPC10 RNA polymerase subunit family.</text>
</comment>
<feature type="chain" id="PRO_0000423321" description="DNA-directed RNA polymerase subunit 12-like protein">
    <location>
        <begin position="1"/>
        <end position="61"/>
    </location>
</feature>
<feature type="binding site" evidence="1">
    <location>
        <position position="21"/>
    </location>
    <ligand>
        <name>Zn(2+)</name>
        <dbReference type="ChEBI" id="CHEBI:29105"/>
    </ligand>
</feature>
<feature type="binding site" evidence="1">
    <location>
        <position position="24"/>
    </location>
    <ligand>
        <name>Zn(2+)</name>
        <dbReference type="ChEBI" id="CHEBI:29105"/>
    </ligand>
</feature>
<feature type="binding site" evidence="1">
    <location>
        <position position="38"/>
    </location>
    <ligand>
        <name>Zn(2+)</name>
        <dbReference type="ChEBI" id="CHEBI:29105"/>
    </ligand>
</feature>
<feature type="binding site" evidence="1">
    <location>
        <position position="41"/>
    </location>
    <ligand>
        <name>Zn(2+)</name>
        <dbReference type="ChEBI" id="CHEBI:29105"/>
    </ligand>
</feature>
<accession>Q9C8M4</accession>